<reference key="1">
    <citation type="journal article" date="2004" name="J. Mol. Microbiol. Biotechnol.">
        <title>The complete genome sequence of Bacillus licheniformis DSM13, an organism with great industrial potential.</title>
        <authorList>
            <person name="Veith B."/>
            <person name="Herzberg C."/>
            <person name="Steckel S."/>
            <person name="Feesche J."/>
            <person name="Maurer K.H."/>
            <person name="Ehrenreich P."/>
            <person name="Baeumer S."/>
            <person name="Henne A."/>
            <person name="Liesegang H."/>
            <person name="Merkl R."/>
            <person name="Ehrenreich A."/>
            <person name="Gottschalk G."/>
        </authorList>
    </citation>
    <scope>NUCLEOTIDE SEQUENCE [LARGE SCALE GENOMIC DNA]</scope>
    <source>
        <strain>ATCC 14580 / DSM 13 / JCM 2505 / CCUG 7422 / NBRC 12200 / NCIMB 9375 / NCTC 10341 / NRRL NRS-1264 / Gibson 46</strain>
    </source>
</reference>
<reference key="2">
    <citation type="journal article" date="2004" name="Genome Biol.">
        <title>Complete genome sequence of the industrial bacterium Bacillus licheniformis and comparisons with closely related Bacillus species.</title>
        <authorList>
            <person name="Rey M.W."/>
            <person name="Ramaiya P."/>
            <person name="Nelson B.A."/>
            <person name="Brody-Karpin S.D."/>
            <person name="Zaretsky E.J."/>
            <person name="Tang M."/>
            <person name="Lopez de Leon A."/>
            <person name="Xiang H."/>
            <person name="Gusti V."/>
            <person name="Clausen I.G."/>
            <person name="Olsen P.B."/>
            <person name="Rasmussen M.D."/>
            <person name="Andersen J.T."/>
            <person name="Joergensen P.L."/>
            <person name="Larsen T.S."/>
            <person name="Sorokin A."/>
            <person name="Bolotin A."/>
            <person name="Lapidus A."/>
            <person name="Galleron N."/>
            <person name="Ehrlich S.D."/>
            <person name="Berka R.M."/>
        </authorList>
    </citation>
    <scope>NUCLEOTIDE SEQUENCE [LARGE SCALE GENOMIC DNA]</scope>
    <source>
        <strain>ATCC 14580 / DSM 13 / JCM 2505 / CCUG 7422 / NBRC 12200 / NCIMB 9375 / NCTC 10341 / NRRL NRS-1264 / Gibson 46</strain>
    </source>
</reference>
<comment type="function">
    <text evidence="1">Promotes RNA polymerase assembly. Latches the N- and C-terminal regions of the beta' subunit thereby facilitating its interaction with the beta and alpha subunits.</text>
</comment>
<comment type="catalytic activity">
    <reaction evidence="1">
        <text>RNA(n) + a ribonucleoside 5'-triphosphate = RNA(n+1) + diphosphate</text>
        <dbReference type="Rhea" id="RHEA:21248"/>
        <dbReference type="Rhea" id="RHEA-COMP:14527"/>
        <dbReference type="Rhea" id="RHEA-COMP:17342"/>
        <dbReference type="ChEBI" id="CHEBI:33019"/>
        <dbReference type="ChEBI" id="CHEBI:61557"/>
        <dbReference type="ChEBI" id="CHEBI:140395"/>
        <dbReference type="EC" id="2.7.7.6"/>
    </reaction>
</comment>
<comment type="subunit">
    <text evidence="1">The RNAP catalytic core consists of 2 alpha, 1 beta, 1 beta' and 1 omega subunit. When a sigma factor is associated with the core the holoenzyme is formed, which can initiate transcription.</text>
</comment>
<comment type="similarity">
    <text evidence="1">Belongs to the RNA polymerase subunit omega family.</text>
</comment>
<accession>Q65JS9</accession>
<accession>Q62V84</accession>
<dbReference type="EC" id="2.7.7.6" evidence="1"/>
<dbReference type="EMBL" id="AE017333">
    <property type="protein sequence ID" value="AAU40685.1"/>
    <property type="molecule type" value="Genomic_DNA"/>
</dbReference>
<dbReference type="EMBL" id="CP000002">
    <property type="protein sequence ID" value="AAU23325.1"/>
    <property type="molecule type" value="Genomic_DNA"/>
</dbReference>
<dbReference type="RefSeq" id="WP_003181661.1">
    <property type="nucleotide sequence ID" value="NC_006322.1"/>
</dbReference>
<dbReference type="SMR" id="Q65JS9"/>
<dbReference type="STRING" id="279010.BL02294"/>
<dbReference type="GeneID" id="92861617"/>
<dbReference type="KEGG" id="bld:BLi01790"/>
<dbReference type="KEGG" id="bli:BL02294"/>
<dbReference type="eggNOG" id="COG1758">
    <property type="taxonomic scope" value="Bacteria"/>
</dbReference>
<dbReference type="HOGENOM" id="CLU_125406_6_0_9"/>
<dbReference type="Proteomes" id="UP000000606">
    <property type="component" value="Chromosome"/>
</dbReference>
<dbReference type="GO" id="GO:0000428">
    <property type="term" value="C:DNA-directed RNA polymerase complex"/>
    <property type="evidence" value="ECO:0007669"/>
    <property type="project" value="UniProtKB-KW"/>
</dbReference>
<dbReference type="GO" id="GO:0003677">
    <property type="term" value="F:DNA binding"/>
    <property type="evidence" value="ECO:0007669"/>
    <property type="project" value="UniProtKB-UniRule"/>
</dbReference>
<dbReference type="GO" id="GO:0003899">
    <property type="term" value="F:DNA-directed RNA polymerase activity"/>
    <property type="evidence" value="ECO:0007669"/>
    <property type="project" value="UniProtKB-UniRule"/>
</dbReference>
<dbReference type="GO" id="GO:0006351">
    <property type="term" value="P:DNA-templated transcription"/>
    <property type="evidence" value="ECO:0007669"/>
    <property type="project" value="UniProtKB-UniRule"/>
</dbReference>
<dbReference type="Gene3D" id="3.90.940.10">
    <property type="match status" value="1"/>
</dbReference>
<dbReference type="HAMAP" id="MF_00366">
    <property type="entry name" value="RNApol_bact_RpoZ"/>
    <property type="match status" value="1"/>
</dbReference>
<dbReference type="InterPro" id="IPR003716">
    <property type="entry name" value="DNA-dir_RNA_pol_omega"/>
</dbReference>
<dbReference type="InterPro" id="IPR006110">
    <property type="entry name" value="Pol_omega/Rpo6/RPB6"/>
</dbReference>
<dbReference type="InterPro" id="IPR036161">
    <property type="entry name" value="RPB6/omega-like_sf"/>
</dbReference>
<dbReference type="NCBIfam" id="TIGR00690">
    <property type="entry name" value="rpoZ"/>
    <property type="match status" value="1"/>
</dbReference>
<dbReference type="PANTHER" id="PTHR34476">
    <property type="entry name" value="DNA-DIRECTED RNA POLYMERASE SUBUNIT OMEGA"/>
    <property type="match status" value="1"/>
</dbReference>
<dbReference type="PANTHER" id="PTHR34476:SF1">
    <property type="entry name" value="DNA-DIRECTED RNA POLYMERASE SUBUNIT OMEGA"/>
    <property type="match status" value="1"/>
</dbReference>
<dbReference type="Pfam" id="PF01192">
    <property type="entry name" value="RNA_pol_Rpb6"/>
    <property type="match status" value="1"/>
</dbReference>
<dbReference type="SMART" id="SM01409">
    <property type="entry name" value="RNA_pol_Rpb6"/>
    <property type="match status" value="1"/>
</dbReference>
<dbReference type="SUPFAM" id="SSF63562">
    <property type="entry name" value="RPB6/omega subunit-like"/>
    <property type="match status" value="1"/>
</dbReference>
<organism>
    <name type="scientific">Bacillus licheniformis (strain ATCC 14580 / DSM 13 / JCM 2505 / CCUG 7422 / NBRC 12200 / NCIMB 9375 / NCTC 10341 / NRRL NRS-1264 / Gibson 46)</name>
    <dbReference type="NCBI Taxonomy" id="279010"/>
    <lineage>
        <taxon>Bacteria</taxon>
        <taxon>Bacillati</taxon>
        <taxon>Bacillota</taxon>
        <taxon>Bacilli</taxon>
        <taxon>Bacillales</taxon>
        <taxon>Bacillaceae</taxon>
        <taxon>Bacillus</taxon>
    </lineage>
</organism>
<feature type="chain" id="PRO_0000237433" description="DNA-directed RNA polymerase subunit omega">
    <location>
        <begin position="1"/>
        <end position="66"/>
    </location>
</feature>
<evidence type="ECO:0000255" key="1">
    <source>
        <dbReference type="HAMAP-Rule" id="MF_00366"/>
    </source>
</evidence>
<gene>
    <name evidence="1" type="primary">rpoZ</name>
    <name type="ordered locus">BLi01790</name>
    <name type="ordered locus">BL02294</name>
</gene>
<protein>
    <recommendedName>
        <fullName evidence="1">DNA-directed RNA polymerase subunit omega</fullName>
        <shortName evidence="1">RNAP omega subunit</shortName>
        <ecNumber evidence="1">2.7.7.6</ecNumber>
    </recommendedName>
    <alternativeName>
        <fullName evidence="1">RNA polymerase omega subunit</fullName>
    </alternativeName>
    <alternativeName>
        <fullName evidence="1">Transcriptase subunit omega</fullName>
    </alternativeName>
</protein>
<name>RPOZ_BACLD</name>
<keyword id="KW-0240">DNA-directed RNA polymerase</keyword>
<keyword id="KW-0548">Nucleotidyltransferase</keyword>
<keyword id="KW-1185">Reference proteome</keyword>
<keyword id="KW-0804">Transcription</keyword>
<keyword id="KW-0808">Transferase</keyword>
<proteinExistence type="inferred from homology"/>
<sequence length="66" mass="7554">MLDPSIDSLMNKLDSKYTLVTVSARRAREMQMNKDAQIENPKSHKFVGKALEEIDAGLLTFEKENR</sequence>